<proteinExistence type="predicted"/>
<feature type="chain" id="PRO_0000097617" description="Antigenic heat-stable 120 kDa protein">
    <location>
        <begin position="1" status="less than"/>
        <end position="991" status="greater than"/>
    </location>
</feature>
<feature type="region of interest" description="Disordered" evidence="1">
    <location>
        <begin position="1"/>
        <end position="37"/>
    </location>
</feature>
<feature type="region of interest" description="Disordered" evidence="1">
    <location>
        <begin position="54"/>
        <end position="73"/>
    </location>
</feature>
<feature type="region of interest" description="Disordered" evidence="1">
    <location>
        <begin position="348"/>
        <end position="384"/>
    </location>
</feature>
<feature type="compositionally biased region" description="Basic and acidic residues" evidence="1">
    <location>
        <begin position="12"/>
        <end position="29"/>
    </location>
</feature>
<feature type="compositionally biased region" description="Polar residues" evidence="1">
    <location>
        <begin position="348"/>
        <end position="373"/>
    </location>
</feature>
<feature type="non-terminal residue">
    <location>
        <position position="1"/>
    </location>
</feature>
<feature type="non-terminal residue">
    <location>
        <position position="991"/>
    </location>
</feature>
<comment type="subcellular location">
    <subcellularLocation>
        <location evidence="2">Cytoplasm</location>
    </subcellularLocation>
</comment>
<gene>
    <name type="primary">sca4</name>
    <name type="synonym">D</name>
</gene>
<name>SCA4_RICSI</name>
<organism>
    <name type="scientific">Rickettsia sibirica</name>
    <dbReference type="NCBI Taxonomy" id="35793"/>
    <lineage>
        <taxon>Bacteria</taxon>
        <taxon>Pseudomonadati</taxon>
        <taxon>Pseudomonadota</taxon>
        <taxon>Alphaproteobacteria</taxon>
        <taxon>Rickettsiales</taxon>
        <taxon>Rickettsiaceae</taxon>
        <taxon>Rickettsieae</taxon>
        <taxon>Rickettsia</taxon>
        <taxon>spotted fever group</taxon>
        <taxon>Rickettsia sibirica subgroup</taxon>
    </lineage>
</organism>
<keyword id="KW-0963">Cytoplasm</keyword>
<accession>Q9AJ77</accession>
<evidence type="ECO:0000256" key="1">
    <source>
        <dbReference type="SAM" id="MobiDB-lite"/>
    </source>
</evidence>
<evidence type="ECO:0000305" key="2"/>
<protein>
    <recommendedName>
        <fullName>Antigenic heat-stable 120 kDa protein</fullName>
    </recommendedName>
    <alternativeName>
        <fullName>120 kDa antigen</fullName>
    </alternativeName>
    <alternativeName>
        <fullName>Protein PS 120</fullName>
        <shortName>PS120</shortName>
    </alternativeName>
</protein>
<sequence length="991" mass="108564">DTSEFDPLANKEYTEEQKQTEEQEQKEFLSHTTTPALEADDGFIVTSASFAQSTPSMSALSGNISPDSQTSDPITKAVRETIIQPQKDNLIEQILKDLAALTDRDLAEQKRKEIEEEKEKDKTLSTFFGNPANREFIDKALENPELKKKLESIEIAGYKNVHNTFSAASGYPGGFKPVQWENHVSASDLRATVVKNDAGDELCTLNETTVKTKPFTLAKQDGTQVQISSYREIDFPIKLDKADGSMHLSMVALKADGTKPSKDKAVYFTAHYEEGPNGKPQLKEISSPKPLKFAGTGDDAIAYIEHGGEIYTLAVTRGKYKEMMKEVELNQGQSVDLSQAEDIIIGQGQSKEQPLITPQQTTSSSVEPPQYKQQVPPITPTNQPLQPETSQMLQSQQVNPNLLNTATALSGSMQDLLNYVNAGLTKEIDSNKQIDLIKEAATAILNNEKSDIAEKQANIIALAENTVNNKNLKPDAKVAGVNAVLETIKNDQNTPNLEKSKMLEATVAIILNSENLEPNQKQQMLEKAVDVGLSLKDDASRAVTIDGIKDVVIKTNLLSNTEKQKLLGSVLKKGVEAQVLSPAQQQLMQQHLDKITAEQIKKDTIKKVNDILFDPLSNTELKTTNIQAITSNVLDGPATAEVKGEIIQEITNTVAGSSLEAQDKAAIIKGVGETIATHSDTSLSLPNKALIMASAEKGIAESQTNLPDRELMTKGLVDGIYEGKGGPEITKAVSSGIDNSNINDSEKEALKKAKDAASEAALDRDTQNLTEGFKGQNIEEHKPHDDIYNKAREVINAVNPVIEALEKSKEPVVSAEERIVHETSSILNNISKLAVEKVNNFRAMLSPNGNLKTLAEKKEESIKKVDELVKAFGTKSSTEEQQSFIKTNLIDDKTLSKEVRLQTIDKLLQEQKRAEAIENPSVKTEDVRVVSGKSKLKPISKDNPDIEKAKMVVGRDRVNIKGNIKIMGALMNARDIIQSENLNKSTPIKRE</sequence>
<reference key="1">
    <citation type="journal article" date="2001" name="Int. J. Syst. Evol. Microbiol.">
        <title>Phylogeny of Rickettsia spp. inferred by comparing sequences of 'gene D', which encodes an intracytoplasmic protein.</title>
        <authorList>
            <person name="Sekeyova Z."/>
            <person name="Roux V."/>
            <person name="Raoult D."/>
        </authorList>
    </citation>
    <scope>NUCLEOTIDE SEQUENCE [GENOMIC DNA]</scope>
</reference>
<dbReference type="EMBL" id="AF155057">
    <property type="protein sequence ID" value="AAK30688.1"/>
    <property type="molecule type" value="Genomic_DNA"/>
</dbReference>
<dbReference type="SMR" id="Q9AJ77"/>
<dbReference type="GO" id="GO:0005737">
    <property type="term" value="C:cytoplasm"/>
    <property type="evidence" value="ECO:0007669"/>
    <property type="project" value="UniProtKB-SubCell"/>
</dbReference>
<dbReference type="InterPro" id="IPR020954">
    <property type="entry name" value="Rickettsia_antigen_120kDa"/>
</dbReference>
<dbReference type="NCBIfam" id="NF038365">
    <property type="entry name" value="Sca4_fam"/>
    <property type="match status" value="1"/>
</dbReference>
<dbReference type="Pfam" id="PF12574">
    <property type="entry name" value="120_Rick_ant"/>
    <property type="match status" value="1"/>
</dbReference>